<accession>P26795</accession>
<feature type="chain" id="PRO_0000157669" description="Large ribosomal subunit protein P2-B">
    <location>
        <begin position="1"/>
        <end position="112"/>
    </location>
</feature>
<feature type="region of interest" description="Disordered" evidence="2">
    <location>
        <begin position="89"/>
        <end position="112"/>
    </location>
</feature>
<name>RLA3_TRYCR</name>
<dbReference type="EMBL" id="X65065">
    <property type="protein sequence ID" value="CAA46198.1"/>
    <property type="molecule type" value="mRNA"/>
</dbReference>
<dbReference type="PIR" id="S22950">
    <property type="entry name" value="R6UT2B"/>
</dbReference>
<dbReference type="VEuPathDB" id="TriTrypDB:BCY84_02064"/>
<dbReference type="VEuPathDB" id="TriTrypDB:C3747_112g598c"/>
<dbReference type="VEuPathDB" id="TriTrypDB:C4B63_26g1318c"/>
<dbReference type="VEuPathDB" id="TriTrypDB:TcBrA4_0119040"/>
<dbReference type="VEuPathDB" id="TriTrypDB:TcCL_ESM03394"/>
<dbReference type="VEuPathDB" id="TriTrypDB:TcCLB.505977.26"/>
<dbReference type="VEuPathDB" id="TriTrypDB:TcG_04538"/>
<dbReference type="GO" id="GO:0022625">
    <property type="term" value="C:cytosolic large ribosomal subunit"/>
    <property type="evidence" value="ECO:0007669"/>
    <property type="project" value="InterPro"/>
</dbReference>
<dbReference type="GO" id="GO:0003735">
    <property type="term" value="F:structural constituent of ribosome"/>
    <property type="evidence" value="ECO:0007669"/>
    <property type="project" value="InterPro"/>
</dbReference>
<dbReference type="GO" id="GO:0002182">
    <property type="term" value="P:cytoplasmic translational elongation"/>
    <property type="evidence" value="ECO:0007669"/>
    <property type="project" value="InterPro"/>
</dbReference>
<dbReference type="CDD" id="cd05833">
    <property type="entry name" value="Ribosomal_P2"/>
    <property type="match status" value="1"/>
</dbReference>
<dbReference type="FunFam" id="1.10.10.1410:FF:000002">
    <property type="entry name" value="60S acidic ribosomal protein P2"/>
    <property type="match status" value="1"/>
</dbReference>
<dbReference type="Gene3D" id="1.10.10.1410">
    <property type="match status" value="1"/>
</dbReference>
<dbReference type="HAMAP" id="MF_01478">
    <property type="entry name" value="Ribosomal_L12_arch"/>
    <property type="match status" value="1"/>
</dbReference>
<dbReference type="InterPro" id="IPR038716">
    <property type="entry name" value="P1/P2_N_sf"/>
</dbReference>
<dbReference type="InterPro" id="IPR027534">
    <property type="entry name" value="Ribosomal_P1/P2"/>
</dbReference>
<dbReference type="InterPro" id="IPR001859">
    <property type="entry name" value="Ribosomal_P1/P2_euk"/>
</dbReference>
<dbReference type="InterPro" id="IPR044076">
    <property type="entry name" value="Ribosomal_P2"/>
</dbReference>
<dbReference type="PANTHER" id="PTHR21141">
    <property type="entry name" value="60S ACIDIC RIBOSOMAL PROTEIN FAMILY MEMBER"/>
    <property type="match status" value="1"/>
</dbReference>
<dbReference type="PANTHER" id="PTHR21141:SF5">
    <property type="entry name" value="LARGE RIBOSOMAL SUBUNIT PROTEIN P2"/>
    <property type="match status" value="1"/>
</dbReference>
<dbReference type="Pfam" id="PF00428">
    <property type="entry name" value="Ribosomal_60s"/>
    <property type="match status" value="1"/>
</dbReference>
<dbReference type="PRINTS" id="PR00456">
    <property type="entry name" value="RIBOSOMALP2"/>
</dbReference>
<protein>
    <recommendedName>
        <fullName evidence="3">Large ribosomal subunit protein P2-B</fullName>
    </recommendedName>
    <alternativeName>
        <fullName>60S acidic ribosomal protein P2-B</fullName>
        <shortName>P2B</shortName>
    </alternativeName>
</protein>
<organism>
    <name type="scientific">Trypanosoma cruzi</name>
    <dbReference type="NCBI Taxonomy" id="5693"/>
    <lineage>
        <taxon>Eukaryota</taxon>
        <taxon>Discoba</taxon>
        <taxon>Euglenozoa</taxon>
        <taxon>Kinetoplastea</taxon>
        <taxon>Metakinetoplastina</taxon>
        <taxon>Trypanosomatida</taxon>
        <taxon>Trypanosomatidae</taxon>
        <taxon>Trypanosoma</taxon>
        <taxon>Schizotrypanum</taxon>
    </lineage>
</organism>
<keyword id="KW-0597">Phosphoprotein</keyword>
<keyword id="KW-0687">Ribonucleoprotein</keyword>
<keyword id="KW-0689">Ribosomal protein</keyword>
<proteinExistence type="inferred from homology"/>
<evidence type="ECO:0000250" key="1"/>
<evidence type="ECO:0000256" key="2">
    <source>
        <dbReference type="SAM" id="MobiDB-lite"/>
    </source>
</evidence>
<evidence type="ECO:0000305" key="3"/>
<reference key="1">
    <citation type="journal article" date="1992" name="Nucleic Acids Res.">
        <title>Nucleotide sequence of a cDNA encoding another Trypanosoma cruzi acidic ribosomal P2 type protein (TcP2b).</title>
        <authorList>
            <person name="Vazquez M.P."/>
            <person name="Schijman A.G."/>
            <person name="Panebra A."/>
            <person name="Levin M.J."/>
        </authorList>
    </citation>
    <scope>NUCLEOTIDE SEQUENCE [MRNA]</scope>
    <source>
        <strain>RA</strain>
    </source>
</reference>
<sequence length="112" mass="10926">MSMKYLAAYALASLNKPTPGAADVEAICKACGIEVESDALSFVMESIAGRSVATLVAEGAAKMSAVAVSAAPAAGDAAAPAAAAGGAAAPAAADAKKEEEEEDDDMGFGLFD</sequence>
<comment type="function">
    <text>Plays an important role in the elongation step of protein synthesis.</text>
</comment>
<comment type="subunit">
    <text>P1 and P2 exist as dimers at the large ribosomal subunit.</text>
</comment>
<comment type="PTM">
    <text evidence="1">Phosphorylated.</text>
</comment>
<comment type="similarity">
    <text evidence="3">Belongs to the eukaryotic ribosomal protein P1/P2 family.</text>
</comment>
<comment type="caution">
    <text evidence="3">It is uncertain whether Met-1 or Met-3 is the initiator.</text>
</comment>